<evidence type="ECO:0000255" key="1">
    <source>
        <dbReference type="PROSITE-ProRule" id="PRU01007"/>
    </source>
</evidence>
<evidence type="ECO:0000269" key="2">
    <source>
    </source>
</evidence>
<evidence type="ECO:0000303" key="3">
    <source>
    </source>
</evidence>
<evidence type="ECO:0000305" key="4"/>
<evidence type="ECO:0000312" key="5">
    <source>
        <dbReference type="Araport" id="AT1G76990"/>
    </source>
</evidence>
<evidence type="ECO:0000312" key="6">
    <source>
        <dbReference type="EMBL" id="AAC00631.1"/>
    </source>
</evidence>
<sequence>MAKVYWPYFDPEYENLSSRINPPSVSIDNTSCKECTLVKVDSMNKPGILLEVVQVLTDLDLTITKAYISSDGGWFMDVFHVTDQQGNKVTDSKTIDYIEKVLGPKGHASASQNTWPGKRVGVHSLGDHTSIEIIARDRPGLLSEVSAVLADLNINVVAAEAWTHNRRIACVLYVNDNATSRAVDDPERLSSMEEQLNNVLRGCEEQDEKFARTSLSIGSTHVDRRLHQMFFADRDYEAVTKLDDSASCGFEPKITVEHCEEKGYSVINVSCEDRPKLMFDIVCTLTDMQYIVFHATISSSGSHASQEYFIRHKDGCTLDTEGEKERVVKCLEAAIHRRVSEGWSLELCAKDRVGLLSEVTRILREHGLSVSRAGVTTVGEQAVNVFYVKDASGNPVDVKTIEALRGEIGHSMMIDFKNKVPSRKWKEEGQAGTGGGWAKTSFFFGNLLEKLLP</sequence>
<reference key="1">
    <citation type="journal article" date="2002" name="Plant Physiol.">
        <title>Molecular characterization of a novel gene family encoding ACT domain repeat proteins in Arabidopsis.</title>
        <authorList>
            <person name="Hsieh M.-H."/>
            <person name="Goodman H.M."/>
        </authorList>
    </citation>
    <scope>NUCLEOTIDE SEQUENCE [MRNA]</scope>
    <scope>FUNCTION</scope>
    <scope>TISSUE SPECIFICITY</scope>
    <scope>INDUCTION</scope>
</reference>
<reference key="2">
    <citation type="journal article" date="2000" name="Nature">
        <title>Sequence and analysis of chromosome 1 of the plant Arabidopsis thaliana.</title>
        <authorList>
            <person name="Theologis A."/>
            <person name="Ecker J.R."/>
            <person name="Palm C.J."/>
            <person name="Federspiel N.A."/>
            <person name="Kaul S."/>
            <person name="White O."/>
            <person name="Alonso J."/>
            <person name="Altafi H."/>
            <person name="Araujo R."/>
            <person name="Bowman C.L."/>
            <person name="Brooks S.Y."/>
            <person name="Buehler E."/>
            <person name="Chan A."/>
            <person name="Chao Q."/>
            <person name="Chen H."/>
            <person name="Cheuk R.F."/>
            <person name="Chin C.W."/>
            <person name="Chung M.K."/>
            <person name="Conn L."/>
            <person name="Conway A.B."/>
            <person name="Conway A.R."/>
            <person name="Creasy T.H."/>
            <person name="Dewar K."/>
            <person name="Dunn P."/>
            <person name="Etgu P."/>
            <person name="Feldblyum T.V."/>
            <person name="Feng J.-D."/>
            <person name="Fong B."/>
            <person name="Fujii C.Y."/>
            <person name="Gill J.E."/>
            <person name="Goldsmith A.D."/>
            <person name="Haas B."/>
            <person name="Hansen N.F."/>
            <person name="Hughes B."/>
            <person name="Huizar L."/>
            <person name="Hunter J.L."/>
            <person name="Jenkins J."/>
            <person name="Johnson-Hopson C."/>
            <person name="Khan S."/>
            <person name="Khaykin E."/>
            <person name="Kim C.J."/>
            <person name="Koo H.L."/>
            <person name="Kremenetskaia I."/>
            <person name="Kurtz D.B."/>
            <person name="Kwan A."/>
            <person name="Lam B."/>
            <person name="Langin-Hooper S."/>
            <person name="Lee A."/>
            <person name="Lee J.M."/>
            <person name="Lenz C.A."/>
            <person name="Li J.H."/>
            <person name="Li Y.-P."/>
            <person name="Lin X."/>
            <person name="Liu S.X."/>
            <person name="Liu Z.A."/>
            <person name="Luros J.S."/>
            <person name="Maiti R."/>
            <person name="Marziali A."/>
            <person name="Militscher J."/>
            <person name="Miranda M."/>
            <person name="Nguyen M."/>
            <person name="Nierman W.C."/>
            <person name="Osborne B.I."/>
            <person name="Pai G."/>
            <person name="Peterson J."/>
            <person name="Pham P.K."/>
            <person name="Rizzo M."/>
            <person name="Rooney T."/>
            <person name="Rowley D."/>
            <person name="Sakano H."/>
            <person name="Salzberg S.L."/>
            <person name="Schwartz J.R."/>
            <person name="Shinn P."/>
            <person name="Southwick A.M."/>
            <person name="Sun H."/>
            <person name="Tallon L.J."/>
            <person name="Tambunga G."/>
            <person name="Toriumi M.J."/>
            <person name="Town C.D."/>
            <person name="Utterback T."/>
            <person name="Van Aken S."/>
            <person name="Vaysberg M."/>
            <person name="Vysotskaia V.S."/>
            <person name="Walker M."/>
            <person name="Wu D."/>
            <person name="Yu G."/>
            <person name="Fraser C.M."/>
            <person name="Venter J.C."/>
            <person name="Davis R.W."/>
        </authorList>
    </citation>
    <scope>NUCLEOTIDE SEQUENCE [LARGE SCALE GENOMIC DNA]</scope>
    <source>
        <strain>cv. Columbia</strain>
    </source>
</reference>
<reference key="3">
    <citation type="journal article" date="2017" name="Plant J.">
        <title>Araport11: a complete reannotation of the Arabidopsis thaliana reference genome.</title>
        <authorList>
            <person name="Cheng C.Y."/>
            <person name="Krishnakumar V."/>
            <person name="Chan A.P."/>
            <person name="Thibaud-Nissen F."/>
            <person name="Schobel S."/>
            <person name="Town C.D."/>
        </authorList>
    </citation>
    <scope>GENOME REANNOTATION</scope>
    <source>
        <strain>cv. Columbia</strain>
    </source>
</reference>
<reference key="4">
    <citation type="journal article" date="2003" name="Science">
        <title>Empirical analysis of transcriptional activity in the Arabidopsis genome.</title>
        <authorList>
            <person name="Yamada K."/>
            <person name="Lim J."/>
            <person name="Dale J.M."/>
            <person name="Chen H."/>
            <person name="Shinn P."/>
            <person name="Palm C.J."/>
            <person name="Southwick A.M."/>
            <person name="Wu H.C."/>
            <person name="Kim C.J."/>
            <person name="Nguyen M."/>
            <person name="Pham P.K."/>
            <person name="Cheuk R.F."/>
            <person name="Karlin-Newmann G."/>
            <person name="Liu S.X."/>
            <person name="Lam B."/>
            <person name="Sakano H."/>
            <person name="Wu T."/>
            <person name="Yu G."/>
            <person name="Miranda M."/>
            <person name="Quach H.L."/>
            <person name="Tripp M."/>
            <person name="Chang C.H."/>
            <person name="Lee J.M."/>
            <person name="Toriumi M.J."/>
            <person name="Chan M.M."/>
            <person name="Tang C.C."/>
            <person name="Onodera C.S."/>
            <person name="Deng J.M."/>
            <person name="Akiyama K."/>
            <person name="Ansari Y."/>
            <person name="Arakawa T."/>
            <person name="Banh J."/>
            <person name="Banno F."/>
            <person name="Bowser L."/>
            <person name="Brooks S.Y."/>
            <person name="Carninci P."/>
            <person name="Chao Q."/>
            <person name="Choy N."/>
            <person name="Enju A."/>
            <person name="Goldsmith A.D."/>
            <person name="Gurjal M."/>
            <person name="Hansen N.F."/>
            <person name="Hayashizaki Y."/>
            <person name="Johnson-Hopson C."/>
            <person name="Hsuan V.W."/>
            <person name="Iida K."/>
            <person name="Karnes M."/>
            <person name="Khan S."/>
            <person name="Koesema E."/>
            <person name="Ishida J."/>
            <person name="Jiang P.X."/>
            <person name="Jones T."/>
            <person name="Kawai J."/>
            <person name="Kamiya A."/>
            <person name="Meyers C."/>
            <person name="Nakajima M."/>
            <person name="Narusaka M."/>
            <person name="Seki M."/>
            <person name="Sakurai T."/>
            <person name="Satou M."/>
            <person name="Tamse R."/>
            <person name="Vaysberg M."/>
            <person name="Wallender E.K."/>
            <person name="Wong C."/>
            <person name="Yamamura Y."/>
            <person name="Yuan S."/>
            <person name="Shinozaki K."/>
            <person name="Davis R.W."/>
            <person name="Theologis A."/>
            <person name="Ecker J.R."/>
        </authorList>
    </citation>
    <scope>NUCLEOTIDE SEQUENCE [LARGE SCALE MRNA]</scope>
    <source>
        <strain>cv. Columbia</strain>
    </source>
</reference>
<reference key="5">
    <citation type="journal article" date="2009" name="DNA Res.">
        <title>Analysis of multiple occurrences of alternative splicing events in Arabidopsis thaliana using novel sequenced full-length cDNAs.</title>
        <authorList>
            <person name="Iida K."/>
            <person name="Fukami-Kobayashi K."/>
            <person name="Toyoda A."/>
            <person name="Sakaki Y."/>
            <person name="Kobayashi M."/>
            <person name="Seki M."/>
            <person name="Shinozaki K."/>
        </authorList>
    </citation>
    <scope>NUCLEOTIDE SEQUENCE [LARGE SCALE MRNA]</scope>
    <source>
        <strain>cv. Columbia</strain>
    </source>
</reference>
<reference key="6">
    <citation type="submission" date="2002-03" db="EMBL/GenBank/DDBJ databases">
        <title>Full-length cDNA from Arabidopsis thaliana.</title>
        <authorList>
            <person name="Brover V.V."/>
            <person name="Troukhan M.E."/>
            <person name="Alexandrov N.A."/>
            <person name="Lu Y.-P."/>
            <person name="Flavell R.B."/>
            <person name="Feldmann K.A."/>
        </authorList>
    </citation>
    <scope>NUCLEOTIDE SEQUENCE [LARGE SCALE MRNA]</scope>
</reference>
<proteinExistence type="evidence at transcript level"/>
<protein>
    <recommendedName>
        <fullName evidence="4">ACT domain-containing protein ACR3</fullName>
    </recommendedName>
    <alternativeName>
        <fullName evidence="3">Protein ACT DOMAIN REPEATS 3</fullName>
    </alternativeName>
</protein>
<keyword id="KW-1185">Reference proteome</keyword>
<keyword id="KW-0677">Repeat</keyword>
<organism>
    <name type="scientific">Arabidopsis thaliana</name>
    <name type="common">Mouse-ear cress</name>
    <dbReference type="NCBI Taxonomy" id="3702"/>
    <lineage>
        <taxon>Eukaryota</taxon>
        <taxon>Viridiplantae</taxon>
        <taxon>Streptophyta</taxon>
        <taxon>Embryophyta</taxon>
        <taxon>Tracheophyta</taxon>
        <taxon>Spermatophyta</taxon>
        <taxon>Magnoliopsida</taxon>
        <taxon>eudicotyledons</taxon>
        <taxon>Gunneridae</taxon>
        <taxon>Pentapetalae</taxon>
        <taxon>rosids</taxon>
        <taxon>malvids</taxon>
        <taxon>Brassicales</taxon>
        <taxon>Brassicaceae</taxon>
        <taxon>Camelineae</taxon>
        <taxon>Arabidopsis</taxon>
    </lineage>
</organism>
<name>ACR3_ARATH</name>
<accession>O49285</accession>
<accession>Q8LA88</accession>
<gene>
    <name evidence="3" type="primary">ACR3</name>
    <name evidence="5" type="ordered locus">At1g76990</name>
    <name evidence="6" type="ORF">F22K20.9</name>
</gene>
<comment type="function">
    <text evidence="3">May bind amino acids.</text>
</comment>
<comment type="tissue specificity">
    <text evidence="2">Expressed in roots, cotyledons, rosette and cauline leaves, sepals, style, and pedicels and tips of young developing siliques.</text>
</comment>
<comment type="induction">
    <text evidence="2">Down-regulated by abscisic acid (ABA).</text>
</comment>
<dbReference type="EMBL" id="AF528059">
    <property type="protein sequence ID" value="AAM93428.1"/>
    <property type="molecule type" value="mRNA"/>
</dbReference>
<dbReference type="EMBL" id="AC002291">
    <property type="protein sequence ID" value="AAC00631.1"/>
    <property type="molecule type" value="Genomic_DNA"/>
</dbReference>
<dbReference type="EMBL" id="CP002684">
    <property type="protein sequence ID" value="AEE35917.1"/>
    <property type="molecule type" value="Genomic_DNA"/>
</dbReference>
<dbReference type="EMBL" id="CP002684">
    <property type="protein sequence ID" value="AEE35918.1"/>
    <property type="molecule type" value="Genomic_DNA"/>
</dbReference>
<dbReference type="EMBL" id="CP002684">
    <property type="protein sequence ID" value="AEE35919.1"/>
    <property type="molecule type" value="Genomic_DNA"/>
</dbReference>
<dbReference type="EMBL" id="CP002684">
    <property type="protein sequence ID" value="AEE35920.1"/>
    <property type="molecule type" value="Genomic_DNA"/>
</dbReference>
<dbReference type="EMBL" id="CP002684">
    <property type="protein sequence ID" value="AEE35921.1"/>
    <property type="molecule type" value="Genomic_DNA"/>
</dbReference>
<dbReference type="EMBL" id="AF360322">
    <property type="protein sequence ID" value="AAK26032.1"/>
    <property type="molecule type" value="mRNA"/>
</dbReference>
<dbReference type="EMBL" id="AY113891">
    <property type="protein sequence ID" value="AAM44939.1"/>
    <property type="molecule type" value="mRNA"/>
</dbReference>
<dbReference type="EMBL" id="AK317369">
    <property type="protein sequence ID" value="BAH20041.1"/>
    <property type="molecule type" value="mRNA"/>
</dbReference>
<dbReference type="EMBL" id="AY087972">
    <property type="protein sequence ID" value="AAM65519.1"/>
    <property type="molecule type" value="mRNA"/>
</dbReference>
<dbReference type="PIR" id="H96798">
    <property type="entry name" value="H96798"/>
</dbReference>
<dbReference type="RefSeq" id="NP_001031289.1">
    <property type="nucleotide sequence ID" value="NM_001036212.1"/>
</dbReference>
<dbReference type="RefSeq" id="NP_001117608.1">
    <property type="nucleotide sequence ID" value="NM_001124136.2"/>
</dbReference>
<dbReference type="RefSeq" id="NP_565146.1">
    <property type="nucleotide sequence ID" value="NM_106350.3"/>
</dbReference>
<dbReference type="RefSeq" id="NP_849896.1">
    <property type="nucleotide sequence ID" value="NM_179565.2"/>
</dbReference>
<dbReference type="RefSeq" id="NP_849897.1">
    <property type="nucleotide sequence ID" value="NM_179566.2"/>
</dbReference>
<dbReference type="FunCoup" id="O49285">
    <property type="interactions" value="208"/>
</dbReference>
<dbReference type="STRING" id="3702.O49285"/>
<dbReference type="iPTMnet" id="O49285"/>
<dbReference type="PaxDb" id="3702-AT1G76990.3"/>
<dbReference type="ProteomicsDB" id="244652"/>
<dbReference type="EnsemblPlants" id="AT1G76990.1">
    <property type="protein sequence ID" value="AT1G76990.1"/>
    <property type="gene ID" value="AT1G76990"/>
</dbReference>
<dbReference type="EnsemblPlants" id="AT1G76990.2">
    <property type="protein sequence ID" value="AT1G76990.2"/>
    <property type="gene ID" value="AT1G76990"/>
</dbReference>
<dbReference type="EnsemblPlants" id="AT1G76990.3">
    <property type="protein sequence ID" value="AT1G76990.3"/>
    <property type="gene ID" value="AT1G76990"/>
</dbReference>
<dbReference type="EnsemblPlants" id="AT1G76990.4">
    <property type="protein sequence ID" value="AT1G76990.4"/>
    <property type="gene ID" value="AT1G76990"/>
</dbReference>
<dbReference type="EnsemblPlants" id="AT1G76990.5">
    <property type="protein sequence ID" value="AT1G76990.5"/>
    <property type="gene ID" value="AT1G76990"/>
</dbReference>
<dbReference type="GeneID" id="844035"/>
<dbReference type="Gramene" id="AT1G76990.1">
    <property type="protein sequence ID" value="AT1G76990.1"/>
    <property type="gene ID" value="AT1G76990"/>
</dbReference>
<dbReference type="Gramene" id="AT1G76990.2">
    <property type="protein sequence ID" value="AT1G76990.2"/>
    <property type="gene ID" value="AT1G76990"/>
</dbReference>
<dbReference type="Gramene" id="AT1G76990.3">
    <property type="protein sequence ID" value="AT1G76990.3"/>
    <property type="gene ID" value="AT1G76990"/>
</dbReference>
<dbReference type="Gramene" id="AT1G76990.4">
    <property type="protein sequence ID" value="AT1G76990.4"/>
    <property type="gene ID" value="AT1G76990"/>
</dbReference>
<dbReference type="Gramene" id="AT1G76990.5">
    <property type="protein sequence ID" value="AT1G76990.5"/>
    <property type="gene ID" value="AT1G76990"/>
</dbReference>
<dbReference type="KEGG" id="ath:AT1G76990"/>
<dbReference type="Araport" id="AT1G76990"/>
<dbReference type="TAIR" id="AT1G76990">
    <property type="gene designation" value="ACR3"/>
</dbReference>
<dbReference type="eggNOG" id="ENOG502R1FF">
    <property type="taxonomic scope" value="Eukaryota"/>
</dbReference>
<dbReference type="HOGENOM" id="CLU_031332_3_0_1"/>
<dbReference type="InParanoid" id="O49285"/>
<dbReference type="OMA" id="HPPMVCI"/>
<dbReference type="OrthoDB" id="2019938at2759"/>
<dbReference type="PhylomeDB" id="O49285"/>
<dbReference type="PRO" id="PR:O49285"/>
<dbReference type="Proteomes" id="UP000006548">
    <property type="component" value="Chromosome 1"/>
</dbReference>
<dbReference type="ExpressionAtlas" id="O49285">
    <property type="expression patterns" value="baseline and differential"/>
</dbReference>
<dbReference type="GO" id="GO:0005829">
    <property type="term" value="C:cytosol"/>
    <property type="evidence" value="ECO:0000304"/>
    <property type="project" value="TAIR"/>
</dbReference>
<dbReference type="GO" id="GO:0016597">
    <property type="term" value="F:amino acid binding"/>
    <property type="evidence" value="ECO:0000250"/>
    <property type="project" value="TAIR"/>
</dbReference>
<dbReference type="CDD" id="cd04895">
    <property type="entry name" value="ACT_ACR_1"/>
    <property type="match status" value="1"/>
</dbReference>
<dbReference type="CDD" id="cd04925">
    <property type="entry name" value="ACT_ACR_2"/>
    <property type="match status" value="1"/>
</dbReference>
<dbReference type="CDD" id="cd04897">
    <property type="entry name" value="ACT_ACR_3"/>
    <property type="match status" value="1"/>
</dbReference>
<dbReference type="CDD" id="cd04926">
    <property type="entry name" value="ACT_ACR_4"/>
    <property type="match status" value="1"/>
</dbReference>
<dbReference type="FunFam" id="3.30.70.260:FF:000060">
    <property type="entry name" value="ACT domain repeat 6"/>
    <property type="match status" value="1"/>
</dbReference>
<dbReference type="FunFam" id="3.30.70.260:FF:000063">
    <property type="entry name" value="ACT domain repeat 6"/>
    <property type="match status" value="1"/>
</dbReference>
<dbReference type="Gene3D" id="3.30.70.260">
    <property type="match status" value="2"/>
</dbReference>
<dbReference type="InterPro" id="IPR040217">
    <property type="entry name" value="ACR1-12"/>
</dbReference>
<dbReference type="InterPro" id="IPR045865">
    <property type="entry name" value="ACT-like_dom_sf"/>
</dbReference>
<dbReference type="InterPro" id="IPR002912">
    <property type="entry name" value="ACT_dom"/>
</dbReference>
<dbReference type="PANTHER" id="PTHR31096:SF5">
    <property type="entry name" value="ACT DOMAIN-CONTAINING PROTEIN ACR3"/>
    <property type="match status" value="1"/>
</dbReference>
<dbReference type="PANTHER" id="PTHR31096">
    <property type="entry name" value="ACT DOMAIN-CONTAINING PROTEIN ACR4-RELATED"/>
    <property type="match status" value="1"/>
</dbReference>
<dbReference type="Pfam" id="PF01842">
    <property type="entry name" value="ACT"/>
    <property type="match status" value="4"/>
</dbReference>
<dbReference type="SUPFAM" id="SSF55021">
    <property type="entry name" value="ACT-like"/>
    <property type="match status" value="3"/>
</dbReference>
<dbReference type="PROSITE" id="PS51671">
    <property type="entry name" value="ACT"/>
    <property type="match status" value="4"/>
</dbReference>
<feature type="chain" id="PRO_0000431457" description="ACT domain-containing protein ACR3">
    <location>
        <begin position="1"/>
        <end position="453"/>
    </location>
</feature>
<feature type="domain" description="ACT 1" evidence="1">
    <location>
        <begin position="37"/>
        <end position="112"/>
    </location>
</feature>
<feature type="domain" description="ACT 2" evidence="1">
    <location>
        <begin position="130"/>
        <end position="212"/>
    </location>
</feature>
<feature type="domain" description="ACT 3" evidence="1">
    <location>
        <begin position="266"/>
        <end position="341"/>
    </location>
</feature>
<feature type="domain" description="ACT 4" evidence="1">
    <location>
        <begin position="344"/>
        <end position="423"/>
    </location>
</feature>